<proteinExistence type="inferred from homology"/>
<organism>
    <name type="scientific">Corynebacterium kroppenstedtii (strain DSM 44385 / JCM 11950 / CIP 105744 / CCUG 35717)</name>
    <dbReference type="NCBI Taxonomy" id="645127"/>
    <lineage>
        <taxon>Bacteria</taxon>
        <taxon>Bacillati</taxon>
        <taxon>Actinomycetota</taxon>
        <taxon>Actinomycetes</taxon>
        <taxon>Mycobacteriales</taxon>
        <taxon>Corynebacteriaceae</taxon>
        <taxon>Corynebacterium</taxon>
    </lineage>
</organism>
<protein>
    <recommendedName>
        <fullName evidence="1">Endoribonuclease YbeY</fullName>
        <ecNumber evidence="1">3.1.-.-</ecNumber>
    </recommendedName>
</protein>
<dbReference type="EC" id="3.1.-.-" evidence="1"/>
<dbReference type="EMBL" id="CP001620">
    <property type="protein sequence ID" value="ACR18065.1"/>
    <property type="molecule type" value="Genomic_DNA"/>
</dbReference>
<dbReference type="RefSeq" id="WP_012731952.1">
    <property type="nucleotide sequence ID" value="NC_012704.1"/>
</dbReference>
<dbReference type="SMR" id="C4LJR0"/>
<dbReference type="STRING" id="645127.ckrop_1321"/>
<dbReference type="KEGG" id="ckp:ckrop_1321"/>
<dbReference type="eggNOG" id="COG0319">
    <property type="taxonomic scope" value="Bacteria"/>
</dbReference>
<dbReference type="HOGENOM" id="CLU_106710_3_2_11"/>
<dbReference type="OrthoDB" id="9807740at2"/>
<dbReference type="Proteomes" id="UP000001473">
    <property type="component" value="Chromosome"/>
</dbReference>
<dbReference type="GO" id="GO:0005737">
    <property type="term" value="C:cytoplasm"/>
    <property type="evidence" value="ECO:0007669"/>
    <property type="project" value="UniProtKB-SubCell"/>
</dbReference>
<dbReference type="GO" id="GO:0004222">
    <property type="term" value="F:metalloendopeptidase activity"/>
    <property type="evidence" value="ECO:0007669"/>
    <property type="project" value="InterPro"/>
</dbReference>
<dbReference type="GO" id="GO:0004521">
    <property type="term" value="F:RNA endonuclease activity"/>
    <property type="evidence" value="ECO:0007669"/>
    <property type="project" value="UniProtKB-UniRule"/>
</dbReference>
<dbReference type="GO" id="GO:0008270">
    <property type="term" value="F:zinc ion binding"/>
    <property type="evidence" value="ECO:0007669"/>
    <property type="project" value="UniProtKB-UniRule"/>
</dbReference>
<dbReference type="GO" id="GO:0006364">
    <property type="term" value="P:rRNA processing"/>
    <property type="evidence" value="ECO:0007669"/>
    <property type="project" value="UniProtKB-UniRule"/>
</dbReference>
<dbReference type="Gene3D" id="3.40.390.30">
    <property type="entry name" value="Metalloproteases ('zincins'), catalytic domain"/>
    <property type="match status" value="1"/>
</dbReference>
<dbReference type="HAMAP" id="MF_00009">
    <property type="entry name" value="Endoribonucl_YbeY"/>
    <property type="match status" value="1"/>
</dbReference>
<dbReference type="InterPro" id="IPR023091">
    <property type="entry name" value="MetalPrtase_cat_dom_sf_prd"/>
</dbReference>
<dbReference type="InterPro" id="IPR002036">
    <property type="entry name" value="YbeY"/>
</dbReference>
<dbReference type="InterPro" id="IPR020549">
    <property type="entry name" value="YbeY_CS"/>
</dbReference>
<dbReference type="NCBIfam" id="TIGR00043">
    <property type="entry name" value="rRNA maturation RNase YbeY"/>
    <property type="match status" value="1"/>
</dbReference>
<dbReference type="PANTHER" id="PTHR46986">
    <property type="entry name" value="ENDORIBONUCLEASE YBEY, CHLOROPLASTIC"/>
    <property type="match status" value="1"/>
</dbReference>
<dbReference type="PANTHER" id="PTHR46986:SF1">
    <property type="entry name" value="ENDORIBONUCLEASE YBEY, CHLOROPLASTIC"/>
    <property type="match status" value="1"/>
</dbReference>
<dbReference type="Pfam" id="PF02130">
    <property type="entry name" value="YbeY"/>
    <property type="match status" value="1"/>
</dbReference>
<dbReference type="SUPFAM" id="SSF55486">
    <property type="entry name" value="Metalloproteases ('zincins'), catalytic domain"/>
    <property type="match status" value="1"/>
</dbReference>
<dbReference type="PROSITE" id="PS01306">
    <property type="entry name" value="UPF0054"/>
    <property type="match status" value="1"/>
</dbReference>
<name>YBEY_CORK4</name>
<keyword id="KW-0963">Cytoplasm</keyword>
<keyword id="KW-0255">Endonuclease</keyword>
<keyword id="KW-0378">Hydrolase</keyword>
<keyword id="KW-0479">Metal-binding</keyword>
<keyword id="KW-0540">Nuclease</keyword>
<keyword id="KW-1185">Reference proteome</keyword>
<keyword id="KW-0690">Ribosome biogenesis</keyword>
<keyword id="KW-0698">rRNA processing</keyword>
<keyword id="KW-0862">Zinc</keyword>
<sequence>MSIEVFNESGYDGVNEEALIDVAQFALMRMDIHPAADMTISIVDEPTIEDLHVRWLNLEGPTDVMSFPMDELTPGSGRPDADAPGPAMLGDIVLCPAFAERQAHRAGHGLGHELSLLTVHGILHLLGYDHVAPEEERRMFALQNDILADWYTDLEERGVSYGPKPTGPGAFPTAADREALDQDMIKSTVGGMLAEPTDRDKS</sequence>
<comment type="function">
    <text evidence="1">Single strand-specific metallo-endoribonuclease involved in late-stage 70S ribosome quality control and in maturation of the 3' terminus of the 16S rRNA.</text>
</comment>
<comment type="cofactor">
    <cofactor evidence="1">
        <name>Zn(2+)</name>
        <dbReference type="ChEBI" id="CHEBI:29105"/>
    </cofactor>
    <text evidence="1">Binds 1 zinc ion.</text>
</comment>
<comment type="subcellular location">
    <subcellularLocation>
        <location evidence="1">Cytoplasm</location>
    </subcellularLocation>
</comment>
<comment type="similarity">
    <text evidence="1">Belongs to the endoribonuclease YbeY family.</text>
</comment>
<accession>C4LJR0</accession>
<evidence type="ECO:0000255" key="1">
    <source>
        <dbReference type="HAMAP-Rule" id="MF_00009"/>
    </source>
</evidence>
<gene>
    <name evidence="1" type="primary">ybeY</name>
    <name type="ordered locus">ckrop_1321</name>
</gene>
<feature type="chain" id="PRO_1000201730" description="Endoribonuclease YbeY">
    <location>
        <begin position="1"/>
        <end position="202"/>
    </location>
</feature>
<feature type="binding site" evidence="1">
    <location>
        <position position="120"/>
    </location>
    <ligand>
        <name>Zn(2+)</name>
        <dbReference type="ChEBI" id="CHEBI:29105"/>
        <note>catalytic</note>
    </ligand>
</feature>
<feature type="binding site" evidence="1">
    <location>
        <position position="124"/>
    </location>
    <ligand>
        <name>Zn(2+)</name>
        <dbReference type="ChEBI" id="CHEBI:29105"/>
        <note>catalytic</note>
    </ligand>
</feature>
<feature type="binding site" evidence="1">
    <location>
        <position position="130"/>
    </location>
    <ligand>
        <name>Zn(2+)</name>
        <dbReference type="ChEBI" id="CHEBI:29105"/>
        <note>catalytic</note>
    </ligand>
</feature>
<reference key="1">
    <citation type="journal article" date="2008" name="J. Biotechnol.">
        <title>Ultrafast pyrosequencing of Corynebacterium kroppenstedtii DSM44385 revealed insights into the physiology of a lipophilic corynebacterium that lacks mycolic acids.</title>
        <authorList>
            <person name="Tauch A."/>
            <person name="Schneider J."/>
            <person name="Szczepanowski R."/>
            <person name="Tilker A."/>
            <person name="Viehoever P."/>
            <person name="Gartemann K.-H."/>
            <person name="Arnold W."/>
            <person name="Blom J."/>
            <person name="Brinkrolf K."/>
            <person name="Brune I."/>
            <person name="Goetker S."/>
            <person name="Weisshaar B."/>
            <person name="Goesmann A."/>
            <person name="Droege M."/>
            <person name="Puehler A."/>
        </authorList>
    </citation>
    <scope>NUCLEOTIDE SEQUENCE [LARGE SCALE GENOMIC DNA]</scope>
    <source>
        <strain>DSM 44385 / JCM 11950 / CIP 105744 / CCUG 35717</strain>
    </source>
</reference>